<evidence type="ECO:0000269" key="1">
    <source>
    </source>
</evidence>
<evidence type="ECO:0000269" key="2">
    <source>
    </source>
</evidence>
<evidence type="ECO:0000269" key="3">
    <source>
    </source>
</evidence>
<evidence type="ECO:0000269" key="4">
    <source>
    </source>
</evidence>
<evidence type="ECO:0000305" key="5"/>
<evidence type="ECO:0000305" key="6">
    <source>
    </source>
</evidence>
<evidence type="ECO:0000312" key="7">
    <source>
        <dbReference type="WormBase" id="Y39G10AR.2a"/>
    </source>
</evidence>
<evidence type="ECO:0000312" key="8">
    <source>
        <dbReference type="WormBase" id="Y39G10AR.2b"/>
    </source>
</evidence>
<evidence type="ECO:0000312" key="9">
    <source>
        <dbReference type="WormBase" id="Y39G10AR.2c"/>
    </source>
</evidence>
<evidence type="ECO:0000312" key="10">
    <source>
        <dbReference type="WormBase" id="Y39G10AR.2d"/>
    </source>
</evidence>
<proteinExistence type="evidence at protein level"/>
<protein>
    <recommendedName>
        <fullName>Protein zwilch homolog</fullName>
    </recommendedName>
</protein>
<comment type="function">
    <text evidence="1 2 4">Essential component of the mitotic checkpoint, which prevents cells from prematurely exiting mitosis (PubMed:18765790). Required for chromosome segregation, the assembly of the dynein-dynactin and mdf-1-mdf-2 complexes onto kinetochores and spindle pole separation (PubMed:18765790). Its function related to the spindle assembly machinery and kinetochore-microtubule attachments likely depends on its association in the mitotic RZZ complex (PubMed:18765790). The RZZ complex recruits the spindly-like protein spdl-1 to kinetochores (PubMed:18765790). To prevent irregular chromosome segregation, the complex also inhibits the attachment of the kinetochore-associated NDC80 complex to microtubules (PubMed:24231804). The recruitment of spdl-1 to kinetochores relieves this inhibition (PubMed:24231804). Required for embryonic development (PubMed:18765790, PubMed:19109417).</text>
</comment>
<comment type="subunit">
    <text evidence="1 4">Component of the RZZ complex composed of rod-1, czw-1 and zwl-1 (PubMed:18765790). Interacts with the spindly-like protein spdl-1 (PubMed:18765790). Interacts with NDC80 complex component ndc-80 (PubMed:24231804).</text>
</comment>
<comment type="subcellular location">
    <subcellularLocation>
        <location evidence="3">Cytoplasm</location>
        <location evidence="3">Cell cortex</location>
    </subcellularLocation>
    <subcellularLocation>
        <location evidence="1 2 3">Chromosome</location>
        <location evidence="1 2 3">Centromere</location>
        <location evidence="1 2 3">Kinetochore</location>
    </subcellularLocation>
    <subcellularLocation>
        <location evidence="5">Cytoplasm</location>
        <location evidence="5">Cytoskeleton</location>
        <location evidence="5">Spindle</location>
    </subcellularLocation>
    <text evidence="1 3 6">Localizes to the kinetochore during nuclear envelope breakdown and remains there until the metaphase-anaphase transition (PubMed:18765790). Localizes to kinetochores, spindle-associated rod-shaped structures and near the cell cortex in a knl-1-dependent manner in anaphase (PubMed:18765790, PubMed:20729837).</text>
</comment>
<comment type="alternative products">
    <event type="alternative splicing"/>
    <isoform>
        <id>Q95XP9-1</id>
        <name evidence="7">a</name>
        <sequence type="displayed"/>
    </isoform>
    <isoform>
        <id>Q95XP9-2</id>
        <name evidence="8">b</name>
        <sequence type="described" ref="VSP_057650"/>
    </isoform>
    <isoform>
        <id>Q95XP9-3</id>
        <name evidence="9">c</name>
        <sequence type="described" ref="VSP_057649"/>
    </isoform>
    <isoform>
        <id>Q95XP9-4</id>
        <name evidence="10">d</name>
        <sequence type="described" ref="VSP_057649 VSP_057650"/>
    </isoform>
</comment>
<comment type="disruption phenotype">
    <text evidence="1 2 3">RNAi-mediated knockdown results in embryonic lethality (PubMed:18765790, PubMed:19109417). RNAi-mediated knockdown results in defective chromosome segregation, premature spindle pole separation and incorrectly attached kinetochores (PubMed:18765790). In addition, knl-1 localization to the spindle-associated rod-shaped structures but not to kinetochores is lost during anaphase of meiosis I (PubMed:20729837). RNAi-mediated knockdown also results in abolished targeting of the spindly-like protein spdl-1 to the kinetochore (PubMed:18765790).</text>
</comment>
<comment type="similarity">
    <text evidence="5">Belongs to the ZWILCH family.</text>
</comment>
<accession>Q95XP9</accession>
<accession>A0A061AD83</accession>
<accession>A0A061AEC9</accession>
<accession>H2KZV1</accession>
<dbReference type="EMBL" id="FO081209">
    <property type="protein sequence ID" value="CCD69901.1"/>
    <property type="molecule type" value="Genomic_DNA"/>
</dbReference>
<dbReference type="EMBL" id="FO081209">
    <property type="protein sequence ID" value="CCE67248.1"/>
    <property type="molecule type" value="Genomic_DNA"/>
</dbReference>
<dbReference type="EMBL" id="FO081209">
    <property type="protein sequence ID" value="CDR32818.1"/>
    <property type="molecule type" value="Genomic_DNA"/>
</dbReference>
<dbReference type="EMBL" id="FO081209">
    <property type="protein sequence ID" value="CDR32819.1"/>
    <property type="molecule type" value="Genomic_DNA"/>
</dbReference>
<dbReference type="RefSeq" id="NP_001249150.1">
    <molecule id="Q95XP9-1"/>
    <property type="nucleotide sequence ID" value="NM_001262221.3"/>
</dbReference>
<dbReference type="RefSeq" id="NP_001249151.1">
    <molecule id="Q95XP9-2"/>
    <property type="nucleotide sequence ID" value="NM_001262222.4"/>
</dbReference>
<dbReference type="RefSeq" id="NP_001293318.1">
    <molecule id="Q95XP9-3"/>
    <property type="nucleotide sequence ID" value="NM_001306389.3"/>
</dbReference>
<dbReference type="RefSeq" id="NP_001293319.1">
    <molecule id="Q95XP9-4"/>
    <property type="nucleotide sequence ID" value="NM_001306390.3"/>
</dbReference>
<dbReference type="SMR" id="Q95XP9"/>
<dbReference type="BioGRID" id="37283">
    <property type="interactions" value="11"/>
</dbReference>
<dbReference type="ComplexPortal" id="CPX-810">
    <property type="entry name" value="RZZ complex"/>
</dbReference>
<dbReference type="FunCoup" id="Q95XP9">
    <property type="interactions" value="246"/>
</dbReference>
<dbReference type="STRING" id="6239.Y39G10AR.2a.1"/>
<dbReference type="PaxDb" id="6239-Y39G10AR.2a"/>
<dbReference type="PeptideAtlas" id="Q95XP9"/>
<dbReference type="EnsemblMetazoa" id="Y39G10AR.2a.1">
    <molecule id="Q95XP9-1"/>
    <property type="protein sequence ID" value="Y39G10AR.2a.1"/>
    <property type="gene ID" value="WBGene00021460"/>
</dbReference>
<dbReference type="EnsemblMetazoa" id="Y39G10AR.2b.1">
    <molecule id="Q95XP9-2"/>
    <property type="protein sequence ID" value="Y39G10AR.2b.1"/>
    <property type="gene ID" value="WBGene00021460"/>
</dbReference>
<dbReference type="EnsemblMetazoa" id="Y39G10AR.2c.1">
    <molecule id="Q95XP9-3"/>
    <property type="protein sequence ID" value="Y39G10AR.2c.1"/>
    <property type="gene ID" value="WBGene00021460"/>
</dbReference>
<dbReference type="EnsemblMetazoa" id="Y39G10AR.2d.1">
    <molecule id="Q95XP9-4"/>
    <property type="protein sequence ID" value="Y39G10AR.2d.1"/>
    <property type="gene ID" value="WBGene00021460"/>
</dbReference>
<dbReference type="GeneID" id="171798"/>
<dbReference type="KEGG" id="cel:CELE_Y39G10AR.2"/>
<dbReference type="UCSC" id="Y39G10AR.2">
    <molecule id="Q95XP9-1"/>
    <property type="organism name" value="c. elegans"/>
</dbReference>
<dbReference type="AGR" id="WB:WBGene00021460"/>
<dbReference type="CTD" id="171798"/>
<dbReference type="WormBase" id="Y39G10AR.2a">
    <molecule id="Q95XP9-1"/>
    <property type="protein sequence ID" value="CE26992"/>
    <property type="gene ID" value="WBGene00021460"/>
    <property type="gene designation" value="zwl-1"/>
</dbReference>
<dbReference type="WormBase" id="Y39G10AR.2b">
    <molecule id="Q95XP9-2"/>
    <property type="protein sequence ID" value="CE46826"/>
    <property type="gene ID" value="WBGene00021460"/>
    <property type="gene designation" value="zwl-1"/>
</dbReference>
<dbReference type="WormBase" id="Y39G10AR.2c">
    <molecule id="Q95XP9-3"/>
    <property type="protein sequence ID" value="CE49916"/>
    <property type="gene ID" value="WBGene00021460"/>
    <property type="gene designation" value="zwl-1"/>
</dbReference>
<dbReference type="WormBase" id="Y39G10AR.2d">
    <molecule id="Q95XP9-4"/>
    <property type="protein sequence ID" value="CE49848"/>
    <property type="gene ID" value="WBGene00021460"/>
    <property type="gene designation" value="zwl-1"/>
</dbReference>
<dbReference type="eggNOG" id="KOG4803">
    <property type="taxonomic scope" value="Eukaryota"/>
</dbReference>
<dbReference type="GeneTree" id="ENSGT00390000013696"/>
<dbReference type="InParanoid" id="Q95XP9"/>
<dbReference type="OMA" id="TDKVWNI"/>
<dbReference type="OrthoDB" id="5556307at2759"/>
<dbReference type="PhylomeDB" id="Q95XP9"/>
<dbReference type="PRO" id="PR:Q95XP9"/>
<dbReference type="Proteomes" id="UP000001940">
    <property type="component" value="Chromosome I"/>
</dbReference>
<dbReference type="Bgee" id="WBGene00021460">
    <property type="expression patterns" value="Expressed in adult organism and 4 other cell types or tissues"/>
</dbReference>
<dbReference type="GO" id="GO:0005938">
    <property type="term" value="C:cell cortex"/>
    <property type="evidence" value="ECO:0007669"/>
    <property type="project" value="UniProtKB-SubCell"/>
</dbReference>
<dbReference type="GO" id="GO:0000776">
    <property type="term" value="C:kinetochore"/>
    <property type="evidence" value="ECO:0000314"/>
    <property type="project" value="UniProtKB"/>
</dbReference>
<dbReference type="GO" id="GO:1990423">
    <property type="term" value="C:RZZ complex"/>
    <property type="evidence" value="ECO:0000314"/>
    <property type="project" value="UniProtKB"/>
</dbReference>
<dbReference type="GO" id="GO:0005819">
    <property type="term" value="C:spindle"/>
    <property type="evidence" value="ECO:0007669"/>
    <property type="project" value="UniProtKB-SubCell"/>
</dbReference>
<dbReference type="GO" id="GO:0051301">
    <property type="term" value="P:cell division"/>
    <property type="evidence" value="ECO:0007669"/>
    <property type="project" value="UniProtKB-KW"/>
</dbReference>
<dbReference type="GO" id="GO:0051321">
    <property type="term" value="P:meiotic cell cycle"/>
    <property type="evidence" value="ECO:0007669"/>
    <property type="project" value="UniProtKB-KW"/>
</dbReference>
<dbReference type="GO" id="GO:0007094">
    <property type="term" value="P:mitotic spindle assembly checkpoint signaling"/>
    <property type="evidence" value="ECO:0000250"/>
    <property type="project" value="UniProtKB"/>
</dbReference>
<dbReference type="GO" id="GO:0010696">
    <property type="term" value="P:positive regulation of mitotic spindle pole body separation"/>
    <property type="evidence" value="ECO:0000315"/>
    <property type="project" value="UniProtKB"/>
</dbReference>
<dbReference type="GO" id="GO:1905342">
    <property type="term" value="P:positive regulation of protein localization to kinetochore"/>
    <property type="evidence" value="ECO:0000315"/>
    <property type="project" value="UniProtKB"/>
</dbReference>
<dbReference type="GO" id="GO:0034501">
    <property type="term" value="P:protein localization to kinetochore"/>
    <property type="evidence" value="ECO:0000314"/>
    <property type="project" value="ComplexPortal"/>
</dbReference>
<dbReference type="GO" id="GO:1903394">
    <property type="term" value="P:protein localization to kinetochore involved in kinetochore assembly"/>
    <property type="evidence" value="ECO:0000315"/>
    <property type="project" value="UniProtKB"/>
</dbReference>
<dbReference type="GO" id="GO:0051988">
    <property type="term" value="P:regulation of attachment of spindle microtubules to kinetochore"/>
    <property type="evidence" value="ECO:0000303"/>
    <property type="project" value="ComplexPortal"/>
</dbReference>
<dbReference type="Gene3D" id="1.10.287.1880">
    <property type="match status" value="1"/>
</dbReference>
<dbReference type="Gene3D" id="1.20.58.730">
    <property type="match status" value="1"/>
</dbReference>
<dbReference type="InterPro" id="IPR018630">
    <property type="entry name" value="Zwilch"/>
</dbReference>
<dbReference type="PANTHER" id="PTHR15995">
    <property type="entry name" value="PROTEIN ZWILCH HOMOLOG"/>
    <property type="match status" value="1"/>
</dbReference>
<dbReference type="PANTHER" id="PTHR15995:SF1">
    <property type="entry name" value="PROTEIN ZWILCH HOMOLOG"/>
    <property type="match status" value="1"/>
</dbReference>
<dbReference type="Pfam" id="PF09817">
    <property type="entry name" value="Zwilch"/>
    <property type="match status" value="1"/>
</dbReference>
<name>ZWILC_CAEEL</name>
<sequence length="630" mass="71096">MPLTIEQLKQYNEKMAAKGEEDDAPAPVLLLDKYRVRVLPLTSIPFVMNHSSVSQLSLSSEDVLVVDFPSKGTGSGAGKAEKKMIFKKKIEPMEDSFEDKENVNEGGPLMTSFLTLEKLRKGMVGDVEIIGYECETSFFDANPIPLSDGVSLQRYIRLNCSEHFSPSISTLPVWISTTSSKFPSICWLAAGRTNRNVQFAAATRVLGHFNNENSERVVKQLNQACGTSQLNKYRAVYEEIRKIATENRPAPGEVTIDVRWSTKSTLVLLEHPDNAADCTIKIDLGWGDKRFFVDDEIFEQLFFVLNLADVLANPDNEVIFPMAPPANFDDLVQEMDALVEASSREDNVFVSNENFRGGDITDKVWNIVRKCNDVKQVTLLFRNFLQALAYGKIKSHAQERNKSHLASLIRISKSSEFKIPVLERLSTIDMMMEIGVESLRRRVIDIFSSQLLYPSDELEFILQTCENDLPAGNGAMNSAAISLLPITMALATANRIYELLNEKDHVILPDLTRRILQKYTASMIEKSRRGETETEYTFETTLPLLRMYKEGFMSKRPCIWTCENSNTVGANVQARVLTSLELQPSLEHINRLVNDSRPVWTATEEKPAMIKDLNADYTVVHTIFSYLPKM</sequence>
<keyword id="KW-0025">Alternative splicing</keyword>
<keyword id="KW-0131">Cell cycle</keyword>
<keyword id="KW-0132">Cell division</keyword>
<keyword id="KW-0137">Centromere</keyword>
<keyword id="KW-0158">Chromosome</keyword>
<keyword id="KW-0963">Cytoplasm</keyword>
<keyword id="KW-0206">Cytoskeleton</keyword>
<keyword id="KW-0217">Developmental protein</keyword>
<keyword id="KW-0995">Kinetochore</keyword>
<keyword id="KW-0469">Meiosis</keyword>
<keyword id="KW-0498">Mitosis</keyword>
<keyword id="KW-1185">Reference proteome</keyword>
<gene>
    <name type="primary">zwl-1</name>
    <name type="ORF">Y39G10AR.2</name>
</gene>
<reference key="1">
    <citation type="journal article" date="1998" name="Science">
        <title>Genome sequence of the nematode C. elegans: a platform for investigating biology.</title>
        <authorList>
            <consortium name="The C. elegans sequencing consortium"/>
        </authorList>
    </citation>
    <scope>NUCLEOTIDE SEQUENCE [LARGE SCALE GENOMIC DNA]</scope>
    <source>
        <strain>Bristol N2</strain>
    </source>
</reference>
<reference key="2">
    <citation type="journal article" date="2008" name="Genes Dev.">
        <title>A new mechanism controlling kinetochore-microtubule interactions revealed by comparison of two dynein-targeting components: SPDL-1 and the Rod/Zwilch/Zw10 complex.</title>
        <authorList>
            <person name="Gassmann R."/>
            <person name="Essex A."/>
            <person name="Hu J.-S."/>
            <person name="Maddox P.S."/>
            <person name="Motegi F."/>
            <person name="Sugimoto A."/>
            <person name="O'Rourke S.M."/>
            <person name="Bowerman B."/>
            <person name="McLeod I."/>
            <person name="Yates J.R. III"/>
            <person name="Oegema K."/>
            <person name="Cheeseman I.M."/>
            <person name="Desai A."/>
        </authorList>
    </citation>
    <scope>FUNCTION</scope>
    <scope>IDENTIFICATION IN RZZ COMPLEX</scope>
    <scope>INTERACTION WITH SPDL-1</scope>
    <scope>SUBCELLULAR LOCATION</scope>
    <scope>DISRUPTION PHENOTYPE</scope>
</reference>
<reference key="3">
    <citation type="journal article" date="2009" name="Mol. Biol. Cell">
        <title>Systematic analysis in Caenorhabditis elegans reveals that the spindle checkpoint is composed of two largely independent branches.</title>
        <authorList>
            <person name="Essex A."/>
            <person name="Dammermann A."/>
            <person name="Lewellyn L."/>
            <person name="Oegema K."/>
            <person name="Desai A."/>
        </authorList>
    </citation>
    <scope>FUNCTION</scope>
    <scope>SUBCELLULAR LOCATION</scope>
    <scope>DISRUPTION PHENOTYPE</scope>
</reference>
<reference key="4">
    <citation type="journal article" date="2010" name="Nat. Cell Biol.">
        <title>A kinetochore-independent mechanism drives anaphase chromosome separation during acentrosomal meiosis.</title>
        <authorList>
            <person name="Dumont J."/>
            <person name="Oegema K."/>
            <person name="Desai A."/>
        </authorList>
    </citation>
    <scope>SUBCELLULAR LOCATION</scope>
    <scope>DISRUPTION PHENOTYPE</scope>
</reference>
<reference key="5">
    <citation type="journal article" date="2013" name="Science">
        <title>Crosstalk between microtubule attachment complexes ensures accurate chromosome segregation.</title>
        <authorList>
            <person name="Cheerambathur D.K."/>
            <person name="Gassmann R."/>
            <person name="Cook B."/>
            <person name="Oegema K."/>
            <person name="Desai A."/>
        </authorList>
    </citation>
    <scope>FUNCTION</scope>
    <scope>INTERACTION WITH NDC-80</scope>
</reference>
<organism>
    <name type="scientific">Caenorhabditis elegans</name>
    <dbReference type="NCBI Taxonomy" id="6239"/>
    <lineage>
        <taxon>Eukaryota</taxon>
        <taxon>Metazoa</taxon>
        <taxon>Ecdysozoa</taxon>
        <taxon>Nematoda</taxon>
        <taxon>Chromadorea</taxon>
        <taxon>Rhabditida</taxon>
        <taxon>Rhabditina</taxon>
        <taxon>Rhabditomorpha</taxon>
        <taxon>Rhabditoidea</taxon>
        <taxon>Rhabditidae</taxon>
        <taxon>Peloderinae</taxon>
        <taxon>Caenorhabditis</taxon>
    </lineage>
</organism>
<feature type="chain" id="PRO_0000314807" description="Protein zwilch homolog">
    <location>
        <begin position="1"/>
        <end position="630"/>
    </location>
</feature>
<feature type="splice variant" id="VSP_057649" description="In isoform c and isoform d." evidence="5">
    <location>
        <begin position="1"/>
        <end position="321"/>
    </location>
</feature>
<feature type="splice variant" id="VSP_057650" description="In isoform b and isoform d." evidence="5">
    <original>NFR</original>
    <variation>K</variation>
    <location>
        <begin position="354"/>
        <end position="356"/>
    </location>
</feature>